<gene>
    <name evidence="1" type="primary">rnhA</name>
</gene>
<name>RNH_PHOLU</name>
<sequence>MGKQVEIFTDGSCLGNPGPGGYGVLLRYQQHEKTLSEGFYRTTNNRMELMAAIIGLETLTRPCKIVLTTDSQYVRQGITQWIHNWKKRGWRKADKSPVSNVDLWQRLDQAISRHDIDWQWVKGHSGHNENEHCDELARAAANSPTETDTGYLENRD</sequence>
<feature type="chain" id="PRO_0000195388" description="Ribonuclease H">
    <location>
        <begin position="1"/>
        <end position="156"/>
    </location>
</feature>
<feature type="domain" description="RNase H type-1" evidence="2">
    <location>
        <begin position="1"/>
        <end position="142"/>
    </location>
</feature>
<feature type="binding site" evidence="1">
    <location>
        <position position="10"/>
    </location>
    <ligand>
        <name>Mg(2+)</name>
        <dbReference type="ChEBI" id="CHEBI:18420"/>
        <label>1</label>
    </ligand>
</feature>
<feature type="binding site" evidence="1">
    <location>
        <position position="10"/>
    </location>
    <ligand>
        <name>Mg(2+)</name>
        <dbReference type="ChEBI" id="CHEBI:18420"/>
        <label>2</label>
    </ligand>
</feature>
<feature type="binding site" evidence="1">
    <location>
        <position position="48"/>
    </location>
    <ligand>
        <name>Mg(2+)</name>
        <dbReference type="ChEBI" id="CHEBI:18420"/>
        <label>1</label>
    </ligand>
</feature>
<feature type="binding site" evidence="1">
    <location>
        <position position="70"/>
    </location>
    <ligand>
        <name>Mg(2+)</name>
        <dbReference type="ChEBI" id="CHEBI:18420"/>
        <label>1</label>
    </ligand>
</feature>
<feature type="binding site" evidence="1">
    <location>
        <position position="134"/>
    </location>
    <ligand>
        <name>Mg(2+)</name>
        <dbReference type="ChEBI" id="CHEBI:18420"/>
        <label>2</label>
    </ligand>
</feature>
<protein>
    <recommendedName>
        <fullName evidence="1">Ribonuclease H</fullName>
        <shortName evidence="1">RNase H</shortName>
        <ecNumber evidence="1">3.1.26.4</ecNumber>
    </recommendedName>
</protein>
<keyword id="KW-0963">Cytoplasm</keyword>
<keyword id="KW-0255">Endonuclease</keyword>
<keyword id="KW-0378">Hydrolase</keyword>
<keyword id="KW-0460">Magnesium</keyword>
<keyword id="KW-0479">Metal-binding</keyword>
<keyword id="KW-0540">Nuclease</keyword>
<accession>Q8GF77</accession>
<dbReference type="EC" id="3.1.26.4" evidence="1"/>
<dbReference type="EMBL" id="AF346500">
    <property type="protein sequence ID" value="AAO17224.1"/>
    <property type="molecule type" value="Genomic_DNA"/>
</dbReference>
<dbReference type="SMR" id="Q8GF77"/>
<dbReference type="STRING" id="29488.KS18_06710"/>
<dbReference type="OrthoDB" id="7845843at2"/>
<dbReference type="GO" id="GO:0005737">
    <property type="term" value="C:cytoplasm"/>
    <property type="evidence" value="ECO:0007669"/>
    <property type="project" value="UniProtKB-SubCell"/>
</dbReference>
<dbReference type="GO" id="GO:0000287">
    <property type="term" value="F:magnesium ion binding"/>
    <property type="evidence" value="ECO:0007669"/>
    <property type="project" value="UniProtKB-UniRule"/>
</dbReference>
<dbReference type="GO" id="GO:0003676">
    <property type="term" value="F:nucleic acid binding"/>
    <property type="evidence" value="ECO:0007669"/>
    <property type="project" value="InterPro"/>
</dbReference>
<dbReference type="GO" id="GO:0004523">
    <property type="term" value="F:RNA-DNA hybrid ribonuclease activity"/>
    <property type="evidence" value="ECO:0007669"/>
    <property type="project" value="UniProtKB-UniRule"/>
</dbReference>
<dbReference type="GO" id="GO:0043137">
    <property type="term" value="P:DNA replication, removal of RNA primer"/>
    <property type="evidence" value="ECO:0007669"/>
    <property type="project" value="TreeGrafter"/>
</dbReference>
<dbReference type="CDD" id="cd09278">
    <property type="entry name" value="RNase_HI_prokaryote_like"/>
    <property type="match status" value="1"/>
</dbReference>
<dbReference type="FunFam" id="3.30.420.10:FF:000008">
    <property type="entry name" value="Ribonuclease H"/>
    <property type="match status" value="1"/>
</dbReference>
<dbReference type="Gene3D" id="3.30.420.10">
    <property type="entry name" value="Ribonuclease H-like superfamily/Ribonuclease H"/>
    <property type="match status" value="1"/>
</dbReference>
<dbReference type="HAMAP" id="MF_00042">
    <property type="entry name" value="RNase_H"/>
    <property type="match status" value="1"/>
</dbReference>
<dbReference type="InterPro" id="IPR050092">
    <property type="entry name" value="RNase_H"/>
</dbReference>
<dbReference type="InterPro" id="IPR012337">
    <property type="entry name" value="RNaseH-like_sf"/>
</dbReference>
<dbReference type="InterPro" id="IPR002156">
    <property type="entry name" value="RNaseH_domain"/>
</dbReference>
<dbReference type="InterPro" id="IPR036397">
    <property type="entry name" value="RNaseH_sf"/>
</dbReference>
<dbReference type="InterPro" id="IPR022892">
    <property type="entry name" value="RNaseHI"/>
</dbReference>
<dbReference type="NCBIfam" id="NF001236">
    <property type="entry name" value="PRK00203.1"/>
    <property type="match status" value="1"/>
</dbReference>
<dbReference type="PANTHER" id="PTHR10642">
    <property type="entry name" value="RIBONUCLEASE H1"/>
    <property type="match status" value="1"/>
</dbReference>
<dbReference type="PANTHER" id="PTHR10642:SF26">
    <property type="entry name" value="RIBONUCLEASE H1"/>
    <property type="match status" value="1"/>
</dbReference>
<dbReference type="Pfam" id="PF00075">
    <property type="entry name" value="RNase_H"/>
    <property type="match status" value="1"/>
</dbReference>
<dbReference type="SUPFAM" id="SSF53098">
    <property type="entry name" value="Ribonuclease H-like"/>
    <property type="match status" value="1"/>
</dbReference>
<dbReference type="PROSITE" id="PS50879">
    <property type="entry name" value="RNASE_H_1"/>
    <property type="match status" value="1"/>
</dbReference>
<organism>
    <name type="scientific">Photorhabdus luminescens</name>
    <name type="common">Xenorhabdus luminescens</name>
    <dbReference type="NCBI Taxonomy" id="29488"/>
    <lineage>
        <taxon>Bacteria</taxon>
        <taxon>Pseudomonadati</taxon>
        <taxon>Pseudomonadota</taxon>
        <taxon>Gammaproteobacteria</taxon>
        <taxon>Enterobacterales</taxon>
        <taxon>Morganellaceae</taxon>
        <taxon>Photorhabdus</taxon>
    </lineage>
</organism>
<reference key="1">
    <citation type="journal article" date="2002" name="Trends Microbiol.">
        <title>Genomic islands in Photorhabdus.</title>
        <authorList>
            <person name="Waterfield N.R."/>
            <person name="Daborn P.J."/>
            <person name="ffrench-Constant R.H."/>
        </authorList>
    </citation>
    <scope>NUCLEOTIDE SEQUENCE [GENOMIC DNA]</scope>
    <source>
        <strain>W14</strain>
    </source>
</reference>
<comment type="function">
    <text evidence="1">Endonuclease that specifically degrades the RNA of RNA-DNA hybrids.</text>
</comment>
<comment type="catalytic activity">
    <reaction evidence="1">
        <text>Endonucleolytic cleavage to 5'-phosphomonoester.</text>
        <dbReference type="EC" id="3.1.26.4"/>
    </reaction>
</comment>
<comment type="cofactor">
    <cofactor evidence="1">
        <name>Mg(2+)</name>
        <dbReference type="ChEBI" id="CHEBI:18420"/>
    </cofactor>
    <text evidence="1">Binds 1 Mg(2+) ion per subunit. May bind a second metal ion at a regulatory site, or after substrate binding.</text>
</comment>
<comment type="subunit">
    <text evidence="1">Monomer.</text>
</comment>
<comment type="subcellular location">
    <subcellularLocation>
        <location evidence="1">Cytoplasm</location>
    </subcellularLocation>
</comment>
<comment type="similarity">
    <text evidence="1">Belongs to the RNase H family.</text>
</comment>
<proteinExistence type="inferred from homology"/>
<evidence type="ECO:0000255" key="1">
    <source>
        <dbReference type="HAMAP-Rule" id="MF_00042"/>
    </source>
</evidence>
<evidence type="ECO:0000255" key="2">
    <source>
        <dbReference type="PROSITE-ProRule" id="PRU00408"/>
    </source>
</evidence>